<feature type="transit peptide" description="Mitochondrion" evidence="2">
    <location>
        <begin position="1"/>
        <end position="40"/>
    </location>
</feature>
<feature type="chain" id="PRO_0000002419" description="ATP synthase mitochondrial F1 complex assembly factor 2">
    <location>
        <begin position="41"/>
        <end position="289"/>
    </location>
</feature>
<feature type="modified residue" description="N6-succinyllysine" evidence="6">
    <location>
        <position position="133"/>
    </location>
</feature>
<proteinExistence type="evidence at protein level"/>
<dbReference type="EMBL" id="AK078500">
    <property type="protein sequence ID" value="BAC37311.1"/>
    <property type="status" value="ALT_INIT"/>
    <property type="molecule type" value="mRNA"/>
</dbReference>
<dbReference type="EMBL" id="AL596090">
    <property type="protein sequence ID" value="CAI24077.1"/>
    <property type="status" value="ALT_INIT"/>
    <property type="molecule type" value="Genomic_DNA"/>
</dbReference>
<dbReference type="EMBL" id="BC013607">
    <property type="protein sequence ID" value="AAH13607.1"/>
    <property type="molecule type" value="mRNA"/>
</dbReference>
<dbReference type="CCDS" id="CCDS24789.2"/>
<dbReference type="RefSeq" id="NP_663402.3">
    <property type="nucleotide sequence ID" value="NM_145427.4"/>
</dbReference>
<dbReference type="SMR" id="Q91YY4"/>
<dbReference type="BioGRID" id="232949">
    <property type="interactions" value="6"/>
</dbReference>
<dbReference type="FunCoup" id="Q91YY4">
    <property type="interactions" value="3123"/>
</dbReference>
<dbReference type="STRING" id="10090.ENSMUSP00000159091"/>
<dbReference type="iPTMnet" id="Q91YY4"/>
<dbReference type="PhosphoSitePlus" id="Q91YY4"/>
<dbReference type="PaxDb" id="10090-ENSMUSP00000104361"/>
<dbReference type="PeptideAtlas" id="Q91YY4"/>
<dbReference type="ProteomicsDB" id="277091"/>
<dbReference type="Pumba" id="Q91YY4"/>
<dbReference type="Antibodypedia" id="13429">
    <property type="antibodies" value="137 antibodies from 24 providers"/>
</dbReference>
<dbReference type="DNASU" id="246782"/>
<dbReference type="Ensembl" id="ENSMUST00000108721.9">
    <property type="protein sequence ID" value="ENSMUSP00000104361.3"/>
    <property type="gene ID" value="ENSMUSG00000042709.17"/>
</dbReference>
<dbReference type="GeneID" id="246782"/>
<dbReference type="KEGG" id="mmu:246782"/>
<dbReference type="UCSC" id="uc007jfv.2">
    <property type="organism name" value="mouse"/>
</dbReference>
<dbReference type="AGR" id="MGI:2180561"/>
<dbReference type="CTD" id="91647"/>
<dbReference type="MGI" id="MGI:2180561">
    <property type="gene designation" value="Atpaf2"/>
</dbReference>
<dbReference type="VEuPathDB" id="HostDB:ENSMUSG00000042709"/>
<dbReference type="eggNOG" id="KOG3015">
    <property type="taxonomic scope" value="Eukaryota"/>
</dbReference>
<dbReference type="GeneTree" id="ENSGT00390000009492"/>
<dbReference type="InParanoid" id="Q91YY4"/>
<dbReference type="PhylomeDB" id="Q91YY4"/>
<dbReference type="TreeFam" id="TF315138"/>
<dbReference type="BioGRID-ORCS" id="246782">
    <property type="hits" value="27 hits in 80 CRISPR screens"/>
</dbReference>
<dbReference type="ChiTaRS" id="Atpaf2">
    <property type="organism name" value="mouse"/>
</dbReference>
<dbReference type="PRO" id="PR:Q91YY4"/>
<dbReference type="Proteomes" id="UP000000589">
    <property type="component" value="Chromosome 11"/>
</dbReference>
<dbReference type="RNAct" id="Q91YY4">
    <property type="molecule type" value="protein"/>
</dbReference>
<dbReference type="Bgee" id="ENSMUSG00000042709">
    <property type="expression patterns" value="Expressed in yolk sac and 200 other cell types or tissues"/>
</dbReference>
<dbReference type="ExpressionAtlas" id="Q91YY4">
    <property type="expression patterns" value="baseline and differential"/>
</dbReference>
<dbReference type="GO" id="GO:0005829">
    <property type="term" value="C:cytosol"/>
    <property type="evidence" value="ECO:0007669"/>
    <property type="project" value="Ensembl"/>
</dbReference>
<dbReference type="GO" id="GO:0005743">
    <property type="term" value="C:mitochondrial inner membrane"/>
    <property type="evidence" value="ECO:0000250"/>
    <property type="project" value="UniProtKB"/>
</dbReference>
<dbReference type="GO" id="GO:0005739">
    <property type="term" value="C:mitochondrion"/>
    <property type="evidence" value="ECO:0007005"/>
    <property type="project" value="MGI"/>
</dbReference>
<dbReference type="GO" id="GO:0016607">
    <property type="term" value="C:nuclear speck"/>
    <property type="evidence" value="ECO:0007669"/>
    <property type="project" value="Ensembl"/>
</dbReference>
<dbReference type="GO" id="GO:0033615">
    <property type="term" value="P:mitochondrial proton-transporting ATP synthase complex assembly"/>
    <property type="evidence" value="ECO:0000250"/>
    <property type="project" value="UniProtKB"/>
</dbReference>
<dbReference type="FunFam" id="1.10.3580.10:FF:000001">
    <property type="entry name" value="ATP synthase mitochondrial F1 complex assembly factor 2"/>
    <property type="match status" value="1"/>
</dbReference>
<dbReference type="FunFam" id="3.30.2180.10:FF:000001">
    <property type="entry name" value="ATP synthase mitochondrial F1 complex assembly factor 2"/>
    <property type="match status" value="1"/>
</dbReference>
<dbReference type="Gene3D" id="1.10.3580.10">
    <property type="entry name" value="ATP12 ATPase"/>
    <property type="match status" value="1"/>
</dbReference>
<dbReference type="Gene3D" id="3.30.2180.10">
    <property type="entry name" value="ATP12-like"/>
    <property type="match status" value="1"/>
</dbReference>
<dbReference type="InterPro" id="IPR011419">
    <property type="entry name" value="ATP12_ATP_synth-F1-assembly"/>
</dbReference>
<dbReference type="InterPro" id="IPR042272">
    <property type="entry name" value="ATP12_ATP_synth-F1-assembly_N"/>
</dbReference>
<dbReference type="InterPro" id="IPR023335">
    <property type="entry name" value="ATP12_ortho_dom_sf"/>
</dbReference>
<dbReference type="PANTHER" id="PTHR21013:SF10">
    <property type="entry name" value="ATP SYNTHASE MITOCHONDRIAL F1 COMPLEX ASSEMBLY FACTOR 2"/>
    <property type="match status" value="1"/>
</dbReference>
<dbReference type="PANTHER" id="PTHR21013">
    <property type="entry name" value="ATP SYNTHASE MITOCHONDRIAL F1 COMPLEX ASSEMBLY FACTOR 2/ATP12 PROTEIN, MITOCHONDRIAL PRECURSOR"/>
    <property type="match status" value="1"/>
</dbReference>
<dbReference type="Pfam" id="PF07542">
    <property type="entry name" value="ATP12"/>
    <property type="match status" value="1"/>
</dbReference>
<dbReference type="SUPFAM" id="SSF160909">
    <property type="entry name" value="ATP12-like"/>
    <property type="match status" value="1"/>
</dbReference>
<organism>
    <name type="scientific">Mus musculus</name>
    <name type="common">Mouse</name>
    <dbReference type="NCBI Taxonomy" id="10090"/>
    <lineage>
        <taxon>Eukaryota</taxon>
        <taxon>Metazoa</taxon>
        <taxon>Chordata</taxon>
        <taxon>Craniata</taxon>
        <taxon>Vertebrata</taxon>
        <taxon>Euteleostomi</taxon>
        <taxon>Mammalia</taxon>
        <taxon>Eutheria</taxon>
        <taxon>Euarchontoglires</taxon>
        <taxon>Glires</taxon>
        <taxon>Rodentia</taxon>
        <taxon>Myomorpha</taxon>
        <taxon>Muroidea</taxon>
        <taxon>Muridae</taxon>
        <taxon>Murinae</taxon>
        <taxon>Mus</taxon>
        <taxon>Mus</taxon>
    </lineage>
</organism>
<evidence type="ECO:0000250" key="1">
    <source>
        <dbReference type="UniProtKB" id="Q8N5M1"/>
    </source>
</evidence>
<evidence type="ECO:0000255" key="2"/>
<evidence type="ECO:0000269" key="3">
    <source>
    </source>
</evidence>
<evidence type="ECO:0000305" key="4"/>
<evidence type="ECO:0000312" key="5">
    <source>
        <dbReference type="MGI" id="MGI:2180561"/>
    </source>
</evidence>
<evidence type="ECO:0007744" key="6">
    <source>
    </source>
</evidence>
<name>ATPF2_MOUSE</name>
<keyword id="KW-0143">Chaperone</keyword>
<keyword id="KW-0472">Membrane</keyword>
<keyword id="KW-0496">Mitochondrion</keyword>
<keyword id="KW-0999">Mitochondrion inner membrane</keyword>
<keyword id="KW-1185">Reference proteome</keyword>
<keyword id="KW-0809">Transit peptide</keyword>
<gene>
    <name evidence="5" type="primary">Atpaf2</name>
</gene>
<reference key="1">
    <citation type="journal article" date="2005" name="Science">
        <title>The transcriptional landscape of the mammalian genome.</title>
        <authorList>
            <person name="Carninci P."/>
            <person name="Kasukawa T."/>
            <person name="Katayama S."/>
            <person name="Gough J."/>
            <person name="Frith M.C."/>
            <person name="Maeda N."/>
            <person name="Oyama R."/>
            <person name="Ravasi T."/>
            <person name="Lenhard B."/>
            <person name="Wells C."/>
            <person name="Kodzius R."/>
            <person name="Shimokawa K."/>
            <person name="Bajic V.B."/>
            <person name="Brenner S.E."/>
            <person name="Batalov S."/>
            <person name="Forrest A.R."/>
            <person name="Zavolan M."/>
            <person name="Davis M.J."/>
            <person name="Wilming L.G."/>
            <person name="Aidinis V."/>
            <person name="Allen J.E."/>
            <person name="Ambesi-Impiombato A."/>
            <person name="Apweiler R."/>
            <person name="Aturaliya R.N."/>
            <person name="Bailey T.L."/>
            <person name="Bansal M."/>
            <person name="Baxter L."/>
            <person name="Beisel K.W."/>
            <person name="Bersano T."/>
            <person name="Bono H."/>
            <person name="Chalk A.M."/>
            <person name="Chiu K.P."/>
            <person name="Choudhary V."/>
            <person name="Christoffels A."/>
            <person name="Clutterbuck D.R."/>
            <person name="Crowe M.L."/>
            <person name="Dalla E."/>
            <person name="Dalrymple B.P."/>
            <person name="de Bono B."/>
            <person name="Della Gatta G."/>
            <person name="di Bernardo D."/>
            <person name="Down T."/>
            <person name="Engstrom P."/>
            <person name="Fagiolini M."/>
            <person name="Faulkner G."/>
            <person name="Fletcher C.F."/>
            <person name="Fukushima T."/>
            <person name="Furuno M."/>
            <person name="Futaki S."/>
            <person name="Gariboldi M."/>
            <person name="Georgii-Hemming P."/>
            <person name="Gingeras T.R."/>
            <person name="Gojobori T."/>
            <person name="Green R.E."/>
            <person name="Gustincich S."/>
            <person name="Harbers M."/>
            <person name="Hayashi Y."/>
            <person name="Hensch T.K."/>
            <person name="Hirokawa N."/>
            <person name="Hill D."/>
            <person name="Huminiecki L."/>
            <person name="Iacono M."/>
            <person name="Ikeo K."/>
            <person name="Iwama A."/>
            <person name="Ishikawa T."/>
            <person name="Jakt M."/>
            <person name="Kanapin A."/>
            <person name="Katoh M."/>
            <person name="Kawasawa Y."/>
            <person name="Kelso J."/>
            <person name="Kitamura H."/>
            <person name="Kitano H."/>
            <person name="Kollias G."/>
            <person name="Krishnan S.P."/>
            <person name="Kruger A."/>
            <person name="Kummerfeld S.K."/>
            <person name="Kurochkin I.V."/>
            <person name="Lareau L.F."/>
            <person name="Lazarevic D."/>
            <person name="Lipovich L."/>
            <person name="Liu J."/>
            <person name="Liuni S."/>
            <person name="McWilliam S."/>
            <person name="Madan Babu M."/>
            <person name="Madera M."/>
            <person name="Marchionni L."/>
            <person name="Matsuda H."/>
            <person name="Matsuzawa S."/>
            <person name="Miki H."/>
            <person name="Mignone F."/>
            <person name="Miyake S."/>
            <person name="Morris K."/>
            <person name="Mottagui-Tabar S."/>
            <person name="Mulder N."/>
            <person name="Nakano N."/>
            <person name="Nakauchi H."/>
            <person name="Ng P."/>
            <person name="Nilsson R."/>
            <person name="Nishiguchi S."/>
            <person name="Nishikawa S."/>
            <person name="Nori F."/>
            <person name="Ohara O."/>
            <person name="Okazaki Y."/>
            <person name="Orlando V."/>
            <person name="Pang K.C."/>
            <person name="Pavan W.J."/>
            <person name="Pavesi G."/>
            <person name="Pesole G."/>
            <person name="Petrovsky N."/>
            <person name="Piazza S."/>
            <person name="Reed J."/>
            <person name="Reid J.F."/>
            <person name="Ring B.Z."/>
            <person name="Ringwald M."/>
            <person name="Rost B."/>
            <person name="Ruan Y."/>
            <person name="Salzberg S.L."/>
            <person name="Sandelin A."/>
            <person name="Schneider C."/>
            <person name="Schoenbach C."/>
            <person name="Sekiguchi K."/>
            <person name="Semple C.A."/>
            <person name="Seno S."/>
            <person name="Sessa L."/>
            <person name="Sheng Y."/>
            <person name="Shibata Y."/>
            <person name="Shimada H."/>
            <person name="Shimada K."/>
            <person name="Silva D."/>
            <person name="Sinclair B."/>
            <person name="Sperling S."/>
            <person name="Stupka E."/>
            <person name="Sugiura K."/>
            <person name="Sultana R."/>
            <person name="Takenaka Y."/>
            <person name="Taki K."/>
            <person name="Tammoja K."/>
            <person name="Tan S.L."/>
            <person name="Tang S."/>
            <person name="Taylor M.S."/>
            <person name="Tegner J."/>
            <person name="Teichmann S.A."/>
            <person name="Ueda H.R."/>
            <person name="van Nimwegen E."/>
            <person name="Verardo R."/>
            <person name="Wei C.L."/>
            <person name="Yagi K."/>
            <person name="Yamanishi H."/>
            <person name="Zabarovsky E."/>
            <person name="Zhu S."/>
            <person name="Zimmer A."/>
            <person name="Hide W."/>
            <person name="Bult C."/>
            <person name="Grimmond S.M."/>
            <person name="Teasdale R.D."/>
            <person name="Liu E.T."/>
            <person name="Brusic V."/>
            <person name="Quackenbush J."/>
            <person name="Wahlestedt C."/>
            <person name="Mattick J.S."/>
            <person name="Hume D.A."/>
            <person name="Kai C."/>
            <person name="Sasaki D."/>
            <person name="Tomaru Y."/>
            <person name="Fukuda S."/>
            <person name="Kanamori-Katayama M."/>
            <person name="Suzuki M."/>
            <person name="Aoki J."/>
            <person name="Arakawa T."/>
            <person name="Iida J."/>
            <person name="Imamura K."/>
            <person name="Itoh M."/>
            <person name="Kato T."/>
            <person name="Kawaji H."/>
            <person name="Kawagashira N."/>
            <person name="Kawashima T."/>
            <person name="Kojima M."/>
            <person name="Kondo S."/>
            <person name="Konno H."/>
            <person name="Nakano K."/>
            <person name="Ninomiya N."/>
            <person name="Nishio T."/>
            <person name="Okada M."/>
            <person name="Plessy C."/>
            <person name="Shibata K."/>
            <person name="Shiraki T."/>
            <person name="Suzuki S."/>
            <person name="Tagami M."/>
            <person name="Waki K."/>
            <person name="Watahiki A."/>
            <person name="Okamura-Oho Y."/>
            <person name="Suzuki H."/>
            <person name="Kawai J."/>
            <person name="Hayashizaki Y."/>
        </authorList>
    </citation>
    <scope>NUCLEOTIDE SEQUENCE [LARGE SCALE MRNA]</scope>
    <source>
        <strain>C57BL/6J</strain>
    </source>
</reference>
<reference key="2">
    <citation type="journal article" date="2009" name="PLoS Biol.">
        <title>Lineage-specific biology revealed by a finished genome assembly of the mouse.</title>
        <authorList>
            <person name="Church D.M."/>
            <person name="Goodstadt L."/>
            <person name="Hillier L.W."/>
            <person name="Zody M.C."/>
            <person name="Goldstein S."/>
            <person name="She X."/>
            <person name="Bult C.J."/>
            <person name="Agarwala R."/>
            <person name="Cherry J.L."/>
            <person name="DiCuccio M."/>
            <person name="Hlavina W."/>
            <person name="Kapustin Y."/>
            <person name="Meric P."/>
            <person name="Maglott D."/>
            <person name="Birtle Z."/>
            <person name="Marques A.C."/>
            <person name="Graves T."/>
            <person name="Zhou S."/>
            <person name="Teague B."/>
            <person name="Potamousis K."/>
            <person name="Churas C."/>
            <person name="Place M."/>
            <person name="Herschleb J."/>
            <person name="Runnheim R."/>
            <person name="Forrest D."/>
            <person name="Amos-Landgraf J."/>
            <person name="Schwartz D.C."/>
            <person name="Cheng Z."/>
            <person name="Lindblad-Toh K."/>
            <person name="Eichler E.E."/>
            <person name="Ponting C.P."/>
        </authorList>
    </citation>
    <scope>NUCLEOTIDE SEQUENCE [LARGE SCALE GENOMIC DNA]</scope>
    <source>
        <strain>C57BL/6J</strain>
    </source>
</reference>
<reference key="3">
    <citation type="journal article" date="2004" name="Genome Res.">
        <title>The status, quality, and expansion of the NIH full-length cDNA project: the Mammalian Gene Collection (MGC).</title>
        <authorList>
            <consortium name="The MGC Project Team"/>
        </authorList>
    </citation>
    <scope>NUCLEOTIDE SEQUENCE [LARGE SCALE MRNA]</scope>
    <source>
        <strain>FVB/N</strain>
        <tissue>Mammary tumor</tissue>
    </source>
</reference>
<reference key="4">
    <citation type="journal article" date="2010" name="Cell">
        <title>A tissue-specific atlas of mouse protein phosphorylation and expression.</title>
        <authorList>
            <person name="Huttlin E.L."/>
            <person name="Jedrychowski M.P."/>
            <person name="Elias J.E."/>
            <person name="Goswami T."/>
            <person name="Rad R."/>
            <person name="Beausoleil S.A."/>
            <person name="Villen J."/>
            <person name="Haas W."/>
            <person name="Sowa M.E."/>
            <person name="Gygi S.P."/>
        </authorList>
    </citation>
    <scope>IDENTIFICATION BY MASS SPECTROMETRY [LARGE SCALE ANALYSIS]</scope>
    <source>
        <tissue>Brain</tissue>
        <tissue>Brown adipose tissue</tissue>
        <tissue>Heart</tissue>
        <tissue>Kidney</tissue>
        <tissue>Liver</tissue>
        <tissue>Lung</tissue>
        <tissue>Pancreas</tissue>
        <tissue>Spleen</tissue>
        <tissue>Testis</tissue>
    </source>
</reference>
<reference key="5">
    <citation type="journal article" date="2013" name="Mol. Cell">
        <title>SIRT5-mediated lysine desuccinylation impacts diverse metabolic pathways.</title>
        <authorList>
            <person name="Park J."/>
            <person name="Chen Y."/>
            <person name="Tishkoff D.X."/>
            <person name="Peng C."/>
            <person name="Tan M."/>
            <person name="Dai L."/>
            <person name="Xie Z."/>
            <person name="Zhang Y."/>
            <person name="Zwaans B.M."/>
            <person name="Skinner M.E."/>
            <person name="Lombard D.B."/>
            <person name="Zhao Y."/>
        </authorList>
    </citation>
    <scope>SUCCINYLATION [LARGE SCALE ANALYSIS] AT LYS-133</scope>
    <scope>IDENTIFICATION BY MASS SPECTROMETRY [LARGE SCALE ANALYSIS]</scope>
    <source>
        <tissue>Liver</tissue>
    </source>
</reference>
<reference key="6">
    <citation type="journal article" date="2021" name="Mitochondrion">
        <title>ATPAF1 deficiency impairs ATP synthase assembly and mitochondrial respiration.</title>
        <authorList>
            <person name="Zhou Z."/>
            <person name="Zhang K."/>
            <person name="Liu Z."/>
            <person name="Gao X."/>
            <person name="Huang K."/>
            <person name="Chen C."/>
            <person name="Wang D."/>
            <person name="Yang Q."/>
            <person name="Long Q."/>
        </authorList>
    </citation>
    <scope>DISRUPTION PHENOTYPE</scope>
</reference>
<comment type="function">
    <text evidence="1">Plays a role in the assembly of the F1 component of the mitochondrial ATP synthase (ATPase).</text>
</comment>
<comment type="subunit">
    <text evidence="1">Interacts with ATP5F1B; involved in the assembly of the F1 component of the mitochondrial ATP synthase (ATPase). Interacts with FMC1.</text>
</comment>
<comment type="subcellular location">
    <subcellularLocation>
        <location evidence="1">Mitochondrion inner membrane</location>
        <topology evidence="1">Peripheral membrane protein</topology>
    </subcellularLocation>
</comment>
<comment type="disruption phenotype">
    <text evidence="3">Essential for embryonic development since it is impossible to obtain homozygous Atpaf2 knockout mice.</text>
</comment>
<comment type="similarity">
    <text evidence="4">Belongs to the ATP12 family.</text>
</comment>
<comment type="sequence caution" evidence="4">
    <conflict type="erroneous initiation">
        <sequence resource="EMBL-CDS" id="BAC37311"/>
    </conflict>
</comment>
<comment type="sequence caution" evidence="4">
    <conflict type="erroneous initiation">
        <sequence resource="EMBL-CDS" id="CAI24077"/>
    </conflict>
</comment>
<accession>Q91YY4</accession>
<accession>Q8BP08</accession>
<sequence>MWRIYPRLRDRWRGLLDRRLSDPTVSVWPGPAPQPPARAYVPPTERKRFYQNVSISQGEGGFEINLDHRKLKTPQAKLFTVPSEALAIAVATEWDSQQDTIKFYTMHLTTLCNTSLDNPTQRSKDQLIRAAVKFLDTDTICYRVEEPETLVELQKNEWDPVIEWAEKRYGMEIGSSTSIMGPSIPTQTREVLTSHLSSYNMWALQGIEFVVAQLKSMLLTLGLIDLRLTVEQAVLLSRLEEEYQIQKWGNIEWAHDYELQELRARTAAGTLFVHLCSESSTVKHKLLQE</sequence>
<protein>
    <recommendedName>
        <fullName evidence="4">ATP synthase mitochondrial F1 complex assembly factor 2</fullName>
    </recommendedName>
</protein>